<comment type="function">
    <text evidence="5 6">Palmitoyltransferase that could catalyze the addition of palmitate onto various protein substrates (PubMed:18794299, PubMed:19299482). Palmitoyltransferase for HTT and GAD2 (PubMed:19299482, PubMed:20548961). May play a role in Mg(2+) transport (PubMed:18794299).</text>
</comment>
<comment type="catalytic activity">
    <reaction evidence="6 7">
        <text>L-cysteinyl-[protein] + hexadecanoyl-CoA = S-hexadecanoyl-L-cysteinyl-[protein] + CoA</text>
        <dbReference type="Rhea" id="RHEA:36683"/>
        <dbReference type="Rhea" id="RHEA-COMP:10131"/>
        <dbReference type="Rhea" id="RHEA-COMP:11032"/>
        <dbReference type="ChEBI" id="CHEBI:29950"/>
        <dbReference type="ChEBI" id="CHEBI:57287"/>
        <dbReference type="ChEBI" id="CHEBI:57379"/>
        <dbReference type="ChEBI" id="CHEBI:74151"/>
        <dbReference type="EC" id="2.3.1.225"/>
    </reaction>
    <physiologicalReaction direction="left-to-right" evidence="14">
        <dbReference type="Rhea" id="RHEA:36684"/>
    </physiologicalReaction>
</comment>
<comment type="subunit">
    <text evidence="8 9 10">Interacts (via ANK repeats) with CLIP3 (PubMed:26198635). Interacts (via ANK repeats) with DNAJC5 (via C-terminus) (PubMed:25253725, PubMed:26198635). Interacts (via ANK repeats) with HTT (PubMed:26198635). Interacts (via ANK repeats) with MAP6 (PubMed:26198635). Interacts (via ANK repeats) with SNAP23 (PubMed:26198635). Interacts (via ANK repeats) with SNAP25 (PubMed:25253725, PubMed:26198635). May interact (via ANK repeats) with SPRED2 (PubMed:28882895).</text>
</comment>
<comment type="subcellular location">
    <subcellularLocation>
        <location evidence="5 6 8">Golgi apparatus membrane</location>
        <topology evidence="3">Multi-pass membrane protein</topology>
    </subcellularLocation>
    <subcellularLocation>
        <location evidence="5">Cytoplasmic vesicle membrane</location>
        <topology evidence="3">Multi-pass membrane protein</topology>
    </subcellularLocation>
    <text evidence="5">Low extracellular Mg(2+) induces increase in Golgi and in post-Golgi vesicles.</text>
</comment>
<comment type="tissue specificity">
    <text evidence="7">Expressed in most adult tissues, but at low levels in the liver, skin, and lung.</text>
</comment>
<comment type="developmental stage">
    <text evidence="7">Expressed most highly in the liver, lung, and brain at posnatal day 2 (P2). In contrast, expressed most highly in skin at P8 in the epithelium surrounding the hair follicles.</text>
</comment>
<comment type="induction">
    <text evidence="5">Up-regulated by low extracellular Mg(2+).</text>
</comment>
<comment type="domain">
    <text evidence="2">The DHHC domain is required for palmitoyltransferase activity.</text>
</comment>
<comment type="disruption phenotype">
    <text evidence="7">Knockdown of the expression in mice through ENU-induced stop codon in the gene or targeted knockout of the gene result is similar phenotypes (PubMed:20548961). Mutant mice are normal at birth, but by postnatal day 7 appear smaller (PubMed:20548961). They display generalized hypotrichosis and hair loss with altered skin that is loose with wrinkling and folding (PubMed:20548961). Kyphosis and osteoporosisis are also observed (PubMed:20548961). Finally, a generalized amyloid deposition results in early death (PubMed:20548961).</text>
</comment>
<comment type="similarity">
    <text evidence="13">Belongs to the DHHC palmitoyltransferase family. AKR/ZDHHC17 subfamily.</text>
</comment>
<sequence>MEGPGLGSQCRNHSHGSHVPGFGRHGICVHENKELAKAKEILPLIEDSSNCDIVKATQYGIFERCKELVEAGYDVRQPDRENVSLLHWAAINNRLELVKFYISKGAVIDQLGGDLNSTPLHWAIRQGHLPMVILLLQHGADPTLIDGEGFSSIHLAVLFQHMPIIAYLISKGQSVNMTDVNGQTPLMLSAYKVIGPEPTGFLLKFNPSLSVVDKTHQNTPLHWAVAAGNVSAVDKLLEAGSSLDIRNAKGETPLDMALQSKNQLISHMLRTEAKMRANKQFRLWRWLHKCELFLLLILSMITLWAVGYILDFNSDSWLLKGCLLVALFFLTSLFPRFLVGYKNLVYLPTVFLLSSIFWIFMTWFILFFPDTAGSPLYFAFIFSIMAFLYFFYKTWATDPGFTKASEEERKVNIVTLAETGSLDFRTFCTSCLIRKPLRSLHCHVCNSCVARFDQHCFWTGRCIGFGNHHHYIFFLLSLSMVCDWIIYGSFVYWSNHCATTFKEDGLWTYLNQIVACSPWVLYIFMLAAFHFSWSTFLLINQLFQIAFLGLTSHERISLLKQSRHMKQTLSLRKTPYNLGFTQNLADFFQCGCFGLVKPCIIDWTSQYTMVFHPAKEKVLRSV</sequence>
<dbReference type="EC" id="2.3.1.225" evidence="6 7"/>
<dbReference type="EMBL" id="AK010382">
    <property type="protein sequence ID" value="BAB26899.2"/>
    <property type="molecule type" value="mRNA"/>
</dbReference>
<dbReference type="EMBL" id="AK145855">
    <property type="protein sequence ID" value="BAE26700.1"/>
    <property type="molecule type" value="mRNA"/>
</dbReference>
<dbReference type="EMBL" id="AK146196">
    <property type="protein sequence ID" value="BAE26970.1"/>
    <property type="molecule type" value="mRNA"/>
</dbReference>
<dbReference type="EMBL" id="BC046599">
    <property type="protein sequence ID" value="AAH46599.1"/>
    <property type="molecule type" value="mRNA"/>
</dbReference>
<dbReference type="CCDS" id="CCDS52259.1"/>
<dbReference type="RefSeq" id="NP_082307.1">
    <property type="nucleotide sequence ID" value="NM_028031.3"/>
</dbReference>
<dbReference type="SMR" id="Q9CWU2"/>
<dbReference type="BioGRID" id="232597">
    <property type="interactions" value="5"/>
</dbReference>
<dbReference type="FunCoup" id="Q9CWU2">
    <property type="interactions" value="2185"/>
</dbReference>
<dbReference type="IntAct" id="Q9CWU2">
    <property type="interactions" value="3"/>
</dbReference>
<dbReference type="STRING" id="10090.ENSMUSP00000112498"/>
<dbReference type="iPTMnet" id="Q9CWU2"/>
<dbReference type="PhosphoSitePlus" id="Q9CWU2"/>
<dbReference type="SwissPalm" id="Q9CWU2"/>
<dbReference type="PaxDb" id="10090-ENSMUSP00000112498"/>
<dbReference type="PeptideAtlas" id="Q9CWU2"/>
<dbReference type="ProteomicsDB" id="298513"/>
<dbReference type="Pumba" id="Q9CWU2"/>
<dbReference type="Antibodypedia" id="6224">
    <property type="antibodies" value="164 antibodies from 34 providers"/>
</dbReference>
<dbReference type="DNASU" id="243983"/>
<dbReference type="Ensembl" id="ENSMUST00000118927.8">
    <property type="protein sequence ID" value="ENSMUSP00000112498.2"/>
    <property type="gene ID" value="ENSMUSG00000030471.18"/>
</dbReference>
<dbReference type="GeneID" id="243983"/>
<dbReference type="KEGG" id="mmu:243983"/>
<dbReference type="UCSC" id="uc009haw.1">
    <property type="organism name" value="mouse"/>
</dbReference>
<dbReference type="AGR" id="MGI:1919227"/>
<dbReference type="CTD" id="54503"/>
<dbReference type="MGI" id="MGI:1919227">
    <property type="gene designation" value="Zdhhc13"/>
</dbReference>
<dbReference type="VEuPathDB" id="HostDB:ENSMUSG00000030471"/>
<dbReference type="eggNOG" id="KOG0509">
    <property type="taxonomic scope" value="Eukaryota"/>
</dbReference>
<dbReference type="GeneTree" id="ENSGT00530000063074"/>
<dbReference type="HOGENOM" id="CLU_012510_3_1_1"/>
<dbReference type="InParanoid" id="Q9CWU2"/>
<dbReference type="OMA" id="RECQSHS"/>
<dbReference type="OrthoDB" id="6781668at2759"/>
<dbReference type="PhylomeDB" id="Q9CWU2"/>
<dbReference type="TreeFam" id="TF317342"/>
<dbReference type="BioGRID-ORCS" id="243983">
    <property type="hits" value="3 hits in 78 CRISPR screens"/>
</dbReference>
<dbReference type="PRO" id="PR:Q9CWU2"/>
<dbReference type="Proteomes" id="UP000000589">
    <property type="component" value="Chromosome 7"/>
</dbReference>
<dbReference type="RNAct" id="Q9CWU2">
    <property type="molecule type" value="protein"/>
</dbReference>
<dbReference type="Bgee" id="ENSMUSG00000030471">
    <property type="expression patterns" value="Expressed in placenta labyrinth and 242 other cell types or tissues"/>
</dbReference>
<dbReference type="ExpressionAtlas" id="Q9CWU2">
    <property type="expression patterns" value="baseline and differential"/>
</dbReference>
<dbReference type="GO" id="GO:0005783">
    <property type="term" value="C:endoplasmic reticulum"/>
    <property type="evidence" value="ECO:0007669"/>
    <property type="project" value="Ensembl"/>
</dbReference>
<dbReference type="GO" id="GO:0005794">
    <property type="term" value="C:Golgi apparatus"/>
    <property type="evidence" value="ECO:0000314"/>
    <property type="project" value="UniProtKB"/>
</dbReference>
<dbReference type="GO" id="GO:0000139">
    <property type="term" value="C:Golgi membrane"/>
    <property type="evidence" value="ECO:0000314"/>
    <property type="project" value="UniProtKB"/>
</dbReference>
<dbReference type="GO" id="GO:0030660">
    <property type="term" value="C:Golgi-associated vesicle membrane"/>
    <property type="evidence" value="ECO:0000314"/>
    <property type="project" value="UniProtKB"/>
</dbReference>
<dbReference type="GO" id="GO:0015095">
    <property type="term" value="F:magnesium ion transmembrane transporter activity"/>
    <property type="evidence" value="ECO:0000314"/>
    <property type="project" value="UniProtKB"/>
</dbReference>
<dbReference type="GO" id="GO:0016409">
    <property type="term" value="F:palmitoyltransferase activity"/>
    <property type="evidence" value="ECO:0000314"/>
    <property type="project" value="UniProtKB"/>
</dbReference>
<dbReference type="GO" id="GO:0019706">
    <property type="term" value="F:protein-cysteine S-palmitoyltransferase activity"/>
    <property type="evidence" value="ECO:0007669"/>
    <property type="project" value="UniProtKB-EC"/>
</dbReference>
<dbReference type="FunFam" id="1.25.40.20:FF:000035">
    <property type="entry name" value="Palmitoyltransferase"/>
    <property type="match status" value="1"/>
</dbReference>
<dbReference type="Gene3D" id="1.25.40.20">
    <property type="entry name" value="Ankyrin repeat-containing domain"/>
    <property type="match status" value="1"/>
</dbReference>
<dbReference type="InterPro" id="IPR002110">
    <property type="entry name" value="Ankyrin_rpt"/>
</dbReference>
<dbReference type="InterPro" id="IPR036770">
    <property type="entry name" value="Ankyrin_rpt-contain_sf"/>
</dbReference>
<dbReference type="InterPro" id="IPR001594">
    <property type="entry name" value="Palmitoyltrfase_DHHC"/>
</dbReference>
<dbReference type="PANTHER" id="PTHR24161">
    <property type="entry name" value="ANK_REP_REGION DOMAIN-CONTAINING PROTEIN-RELATED"/>
    <property type="match status" value="1"/>
</dbReference>
<dbReference type="PANTHER" id="PTHR24161:SF16">
    <property type="entry name" value="PALMITOYLTRANSFERASE ZDHHC13"/>
    <property type="match status" value="1"/>
</dbReference>
<dbReference type="Pfam" id="PF12796">
    <property type="entry name" value="Ank_2"/>
    <property type="match status" value="1"/>
</dbReference>
<dbReference type="Pfam" id="PF13857">
    <property type="entry name" value="Ank_5"/>
    <property type="match status" value="1"/>
</dbReference>
<dbReference type="Pfam" id="PF01529">
    <property type="entry name" value="DHHC"/>
    <property type="match status" value="1"/>
</dbReference>
<dbReference type="SMART" id="SM00248">
    <property type="entry name" value="ANK"/>
    <property type="match status" value="6"/>
</dbReference>
<dbReference type="SUPFAM" id="SSF48403">
    <property type="entry name" value="Ankyrin repeat"/>
    <property type="match status" value="1"/>
</dbReference>
<dbReference type="PROSITE" id="PS50297">
    <property type="entry name" value="ANK_REP_REGION"/>
    <property type="match status" value="1"/>
</dbReference>
<dbReference type="PROSITE" id="PS50088">
    <property type="entry name" value="ANK_REPEAT"/>
    <property type="match status" value="4"/>
</dbReference>
<dbReference type="PROSITE" id="PS50216">
    <property type="entry name" value="DHHC"/>
    <property type="match status" value="1"/>
</dbReference>
<gene>
    <name evidence="15" type="primary">Zdhhc13</name>
    <name type="synonym">Hip14l</name>
</gene>
<feature type="chain" id="PRO_0000212889" description="Palmitoyltransferase ZDHHC13">
    <location>
        <begin position="1"/>
        <end position="622"/>
    </location>
</feature>
<feature type="topological domain" description="Cytoplasmic" evidence="13">
    <location>
        <begin position="1"/>
        <end position="291"/>
    </location>
</feature>
<feature type="transmembrane region" description="Helical" evidence="3">
    <location>
        <begin position="292"/>
        <end position="312"/>
    </location>
</feature>
<feature type="topological domain" description="Lumenal" evidence="13">
    <location>
        <begin position="313"/>
        <end position="320"/>
    </location>
</feature>
<feature type="transmembrane region" description="Helical" evidence="3">
    <location>
        <begin position="321"/>
        <end position="341"/>
    </location>
</feature>
<feature type="topological domain" description="Cytoplasmic" evidence="13">
    <location>
        <begin position="342"/>
        <end position="347"/>
    </location>
</feature>
<feature type="transmembrane region" description="Helical" evidence="3">
    <location>
        <begin position="348"/>
        <end position="368"/>
    </location>
</feature>
<feature type="topological domain" description="Lumenal" evidence="13">
    <location>
        <begin position="369"/>
        <end position="371"/>
    </location>
</feature>
<feature type="transmembrane region" description="Helical" evidence="3">
    <location>
        <begin position="372"/>
        <end position="392"/>
    </location>
</feature>
<feature type="topological domain" description="Cytoplasmic" evidence="13">
    <location>
        <begin position="393"/>
        <end position="470"/>
    </location>
</feature>
<feature type="transmembrane region" description="Helical" evidence="3">
    <location>
        <begin position="471"/>
        <end position="491"/>
    </location>
</feature>
<feature type="topological domain" description="Lumenal" evidence="13">
    <location>
        <begin position="492"/>
        <end position="518"/>
    </location>
</feature>
<feature type="transmembrane region" description="Helical" evidence="3">
    <location>
        <begin position="519"/>
        <end position="539"/>
    </location>
</feature>
<feature type="topological domain" description="Cytoplasmic" evidence="13">
    <location>
        <begin position="540"/>
        <end position="622"/>
    </location>
</feature>
<feature type="repeat" description="ANK 1" evidence="2">
    <location>
        <begin position="43"/>
        <end position="78"/>
    </location>
</feature>
<feature type="repeat" description="ANK 2" evidence="3">
    <location>
        <begin position="81"/>
        <end position="110"/>
    </location>
</feature>
<feature type="repeat" description="ANK 3" evidence="3">
    <location>
        <begin position="115"/>
        <end position="144"/>
    </location>
</feature>
<feature type="repeat" description="ANK 4" evidence="3">
    <location>
        <begin position="148"/>
        <end position="177"/>
    </location>
</feature>
<feature type="repeat" description="ANK 5" evidence="3">
    <location>
        <begin position="181"/>
        <end position="211"/>
    </location>
</feature>
<feature type="repeat" description="ANK 6" evidence="3">
    <location>
        <begin position="216"/>
        <end position="245"/>
    </location>
</feature>
<feature type="repeat" description="ANK 7" evidence="3">
    <location>
        <begin position="249"/>
        <end position="277"/>
    </location>
</feature>
<feature type="domain" description="DHHC" evidence="4">
    <location>
        <begin position="426"/>
        <end position="476"/>
    </location>
</feature>
<feature type="active site" description="S-palmitoyl cysteine intermediate" evidence="4">
    <location>
        <position position="456"/>
    </location>
</feature>
<feature type="modified residue" description="N-acetylmethionine" evidence="1">
    <location>
        <position position="1"/>
    </location>
</feature>
<feature type="sequence conflict" description="In Ref. 1; BAE26700." evidence="13" ref="1">
    <original>Q</original>
    <variation>L</variation>
    <location>
        <position position="110"/>
    </location>
</feature>
<evidence type="ECO:0000250" key="1">
    <source>
        <dbReference type="UniProtKB" id="Q8IUH4"/>
    </source>
</evidence>
<evidence type="ECO:0000250" key="2">
    <source>
        <dbReference type="UniProtKB" id="Q8IUH5"/>
    </source>
</evidence>
<evidence type="ECO:0000255" key="3"/>
<evidence type="ECO:0000255" key="4">
    <source>
        <dbReference type="PROSITE-ProRule" id="PRU00067"/>
    </source>
</evidence>
<evidence type="ECO:0000269" key="5">
    <source>
    </source>
</evidence>
<evidence type="ECO:0000269" key="6">
    <source>
    </source>
</evidence>
<evidence type="ECO:0000269" key="7">
    <source>
    </source>
</evidence>
<evidence type="ECO:0000269" key="8">
    <source>
    </source>
</evidence>
<evidence type="ECO:0000269" key="9">
    <source>
    </source>
</evidence>
<evidence type="ECO:0000269" key="10">
    <source>
    </source>
</evidence>
<evidence type="ECO:0000303" key="11">
    <source>
    </source>
</evidence>
<evidence type="ECO:0000303" key="12">
    <source>
    </source>
</evidence>
<evidence type="ECO:0000305" key="13"/>
<evidence type="ECO:0000305" key="14">
    <source>
    </source>
</evidence>
<evidence type="ECO:0000312" key="15">
    <source>
        <dbReference type="MGI" id="MGI:1919227"/>
    </source>
</evidence>
<name>ZDH13_MOUSE</name>
<reference key="1">
    <citation type="journal article" date="2005" name="Science">
        <title>The transcriptional landscape of the mammalian genome.</title>
        <authorList>
            <person name="Carninci P."/>
            <person name="Kasukawa T."/>
            <person name="Katayama S."/>
            <person name="Gough J."/>
            <person name="Frith M.C."/>
            <person name="Maeda N."/>
            <person name="Oyama R."/>
            <person name="Ravasi T."/>
            <person name="Lenhard B."/>
            <person name="Wells C."/>
            <person name="Kodzius R."/>
            <person name="Shimokawa K."/>
            <person name="Bajic V.B."/>
            <person name="Brenner S.E."/>
            <person name="Batalov S."/>
            <person name="Forrest A.R."/>
            <person name="Zavolan M."/>
            <person name="Davis M.J."/>
            <person name="Wilming L.G."/>
            <person name="Aidinis V."/>
            <person name="Allen J.E."/>
            <person name="Ambesi-Impiombato A."/>
            <person name="Apweiler R."/>
            <person name="Aturaliya R.N."/>
            <person name="Bailey T.L."/>
            <person name="Bansal M."/>
            <person name="Baxter L."/>
            <person name="Beisel K.W."/>
            <person name="Bersano T."/>
            <person name="Bono H."/>
            <person name="Chalk A.M."/>
            <person name="Chiu K.P."/>
            <person name="Choudhary V."/>
            <person name="Christoffels A."/>
            <person name="Clutterbuck D.R."/>
            <person name="Crowe M.L."/>
            <person name="Dalla E."/>
            <person name="Dalrymple B.P."/>
            <person name="de Bono B."/>
            <person name="Della Gatta G."/>
            <person name="di Bernardo D."/>
            <person name="Down T."/>
            <person name="Engstrom P."/>
            <person name="Fagiolini M."/>
            <person name="Faulkner G."/>
            <person name="Fletcher C.F."/>
            <person name="Fukushima T."/>
            <person name="Furuno M."/>
            <person name="Futaki S."/>
            <person name="Gariboldi M."/>
            <person name="Georgii-Hemming P."/>
            <person name="Gingeras T.R."/>
            <person name="Gojobori T."/>
            <person name="Green R.E."/>
            <person name="Gustincich S."/>
            <person name="Harbers M."/>
            <person name="Hayashi Y."/>
            <person name="Hensch T.K."/>
            <person name="Hirokawa N."/>
            <person name="Hill D."/>
            <person name="Huminiecki L."/>
            <person name="Iacono M."/>
            <person name="Ikeo K."/>
            <person name="Iwama A."/>
            <person name="Ishikawa T."/>
            <person name="Jakt M."/>
            <person name="Kanapin A."/>
            <person name="Katoh M."/>
            <person name="Kawasawa Y."/>
            <person name="Kelso J."/>
            <person name="Kitamura H."/>
            <person name="Kitano H."/>
            <person name="Kollias G."/>
            <person name="Krishnan S.P."/>
            <person name="Kruger A."/>
            <person name="Kummerfeld S.K."/>
            <person name="Kurochkin I.V."/>
            <person name="Lareau L.F."/>
            <person name="Lazarevic D."/>
            <person name="Lipovich L."/>
            <person name="Liu J."/>
            <person name="Liuni S."/>
            <person name="McWilliam S."/>
            <person name="Madan Babu M."/>
            <person name="Madera M."/>
            <person name="Marchionni L."/>
            <person name="Matsuda H."/>
            <person name="Matsuzawa S."/>
            <person name="Miki H."/>
            <person name="Mignone F."/>
            <person name="Miyake S."/>
            <person name="Morris K."/>
            <person name="Mottagui-Tabar S."/>
            <person name="Mulder N."/>
            <person name="Nakano N."/>
            <person name="Nakauchi H."/>
            <person name="Ng P."/>
            <person name="Nilsson R."/>
            <person name="Nishiguchi S."/>
            <person name="Nishikawa S."/>
            <person name="Nori F."/>
            <person name="Ohara O."/>
            <person name="Okazaki Y."/>
            <person name="Orlando V."/>
            <person name="Pang K.C."/>
            <person name="Pavan W.J."/>
            <person name="Pavesi G."/>
            <person name="Pesole G."/>
            <person name="Petrovsky N."/>
            <person name="Piazza S."/>
            <person name="Reed J."/>
            <person name="Reid J.F."/>
            <person name="Ring B.Z."/>
            <person name="Ringwald M."/>
            <person name="Rost B."/>
            <person name="Ruan Y."/>
            <person name="Salzberg S.L."/>
            <person name="Sandelin A."/>
            <person name="Schneider C."/>
            <person name="Schoenbach C."/>
            <person name="Sekiguchi K."/>
            <person name="Semple C.A."/>
            <person name="Seno S."/>
            <person name="Sessa L."/>
            <person name="Sheng Y."/>
            <person name="Shibata Y."/>
            <person name="Shimada H."/>
            <person name="Shimada K."/>
            <person name="Silva D."/>
            <person name="Sinclair B."/>
            <person name="Sperling S."/>
            <person name="Stupka E."/>
            <person name="Sugiura K."/>
            <person name="Sultana R."/>
            <person name="Takenaka Y."/>
            <person name="Taki K."/>
            <person name="Tammoja K."/>
            <person name="Tan S.L."/>
            <person name="Tang S."/>
            <person name="Taylor M.S."/>
            <person name="Tegner J."/>
            <person name="Teichmann S.A."/>
            <person name="Ueda H.R."/>
            <person name="van Nimwegen E."/>
            <person name="Verardo R."/>
            <person name="Wei C.L."/>
            <person name="Yagi K."/>
            <person name="Yamanishi H."/>
            <person name="Zabarovsky E."/>
            <person name="Zhu S."/>
            <person name="Zimmer A."/>
            <person name="Hide W."/>
            <person name="Bult C."/>
            <person name="Grimmond S.M."/>
            <person name="Teasdale R.D."/>
            <person name="Liu E.T."/>
            <person name="Brusic V."/>
            <person name="Quackenbush J."/>
            <person name="Wahlestedt C."/>
            <person name="Mattick J.S."/>
            <person name="Hume D.A."/>
            <person name="Kai C."/>
            <person name="Sasaki D."/>
            <person name="Tomaru Y."/>
            <person name="Fukuda S."/>
            <person name="Kanamori-Katayama M."/>
            <person name="Suzuki M."/>
            <person name="Aoki J."/>
            <person name="Arakawa T."/>
            <person name="Iida J."/>
            <person name="Imamura K."/>
            <person name="Itoh M."/>
            <person name="Kato T."/>
            <person name="Kawaji H."/>
            <person name="Kawagashira N."/>
            <person name="Kawashima T."/>
            <person name="Kojima M."/>
            <person name="Kondo S."/>
            <person name="Konno H."/>
            <person name="Nakano K."/>
            <person name="Ninomiya N."/>
            <person name="Nishio T."/>
            <person name="Okada M."/>
            <person name="Plessy C."/>
            <person name="Shibata K."/>
            <person name="Shiraki T."/>
            <person name="Suzuki S."/>
            <person name="Tagami M."/>
            <person name="Waki K."/>
            <person name="Watahiki A."/>
            <person name="Okamura-Oho Y."/>
            <person name="Suzuki H."/>
            <person name="Kawai J."/>
            <person name="Hayashizaki Y."/>
        </authorList>
    </citation>
    <scope>NUCLEOTIDE SEQUENCE [LARGE SCALE MRNA]</scope>
    <source>
        <strain>C57BL/6J</strain>
        <tissue>Placenta</tissue>
    </source>
</reference>
<reference key="2">
    <citation type="journal article" date="2004" name="Genome Res.">
        <title>The status, quality, and expansion of the NIH full-length cDNA project: the Mammalian Gene Collection (MGC).</title>
        <authorList>
            <consortium name="The MGC Project Team"/>
        </authorList>
    </citation>
    <scope>NUCLEOTIDE SEQUENCE [LARGE SCALE MRNA]</scope>
    <source>
        <tissue>Olfactory epithelium</tissue>
    </source>
</reference>
<reference key="3">
    <citation type="journal article" date="2008" name="J. Biol. Chem.">
        <title>Huntingtin-interacting proteins, HIP14 and HIP14L, mediate dual functions, palmitoyl acyltransferase and Mg2+ transport.</title>
        <authorList>
            <person name="Goytain A."/>
            <person name="Hines R.M."/>
            <person name="Quamme G.A."/>
        </authorList>
    </citation>
    <scope>FUNCTION</scope>
    <scope>INDUCTION</scope>
    <scope>SUBCELLULAR LOCATION</scope>
</reference>
<reference key="4">
    <citation type="journal article" date="2009" name="FASEB J.">
        <title>Neuronal palmitoyl acyl transferases exhibit distinct substrate specificity.</title>
        <authorList>
            <person name="Huang K."/>
            <person name="Sanders S."/>
            <person name="Singaraja R."/>
            <person name="Orban P."/>
            <person name="Cijsouw T."/>
            <person name="Arstikaitis P."/>
            <person name="Yanai A."/>
            <person name="Hayden M.R."/>
            <person name="El-Husseini A."/>
        </authorList>
    </citation>
    <scope>FUNCTION</scope>
    <scope>CATALYTIC ACTIVITY</scope>
    <scope>SUBCELLULAR LOCATION</scope>
</reference>
<reference key="5">
    <citation type="journal article" date="2010" name="Cell">
        <title>A tissue-specific atlas of mouse protein phosphorylation and expression.</title>
        <authorList>
            <person name="Huttlin E.L."/>
            <person name="Jedrychowski M.P."/>
            <person name="Elias J.E."/>
            <person name="Goswami T."/>
            <person name="Rad R."/>
            <person name="Beausoleil S.A."/>
            <person name="Villen J."/>
            <person name="Haas W."/>
            <person name="Sowa M.E."/>
            <person name="Gygi S.P."/>
        </authorList>
    </citation>
    <scope>IDENTIFICATION BY MASS SPECTROMETRY [LARGE SCALE ANALYSIS]</scope>
    <source>
        <tissue>Testis</tissue>
    </source>
</reference>
<reference key="6">
    <citation type="journal article" date="2010" name="PLoS Genet.">
        <title>Mice with alopecia, osteoporosis, and systemic amyloidosis due to mutation in Zdhhc13, a gene coding for palmitoyl acyltransferase.</title>
        <authorList>
            <person name="Saleem A.N."/>
            <person name="Chen Y.H."/>
            <person name="Baek H.J."/>
            <person name="Hsiao Y.W."/>
            <person name="Huang H.W."/>
            <person name="Kao H.J."/>
            <person name="Liu K.M."/>
            <person name="Shen L.F."/>
            <person name="Song I.W."/>
            <person name="Tu C.P."/>
            <person name="Wu J.Y."/>
            <person name="Kikuchi T."/>
            <person name="Justice M.J."/>
            <person name="Yen J.J."/>
            <person name="Chen Y.T."/>
        </authorList>
    </citation>
    <scope>FUNCTION</scope>
    <scope>CATALYTIC ACTIVITY</scope>
    <scope>DEVELOPMENTAL STAGE</scope>
    <scope>TISSUE SPECIFICITY</scope>
    <scope>DISRUPTION PHENOTYPE</scope>
</reference>
<reference key="7">
    <citation type="journal article" date="2014" name="Mol. Biol. Cell">
        <title>The Golgi S-acylation machinery comprises zDHHC enzymes with major differences in substrate affinity and S-acylation activity.</title>
        <authorList>
            <person name="Lemonidis K."/>
            <person name="Gorleku O.A."/>
            <person name="Sanchez-Perez M.C."/>
            <person name="Grefen C."/>
            <person name="Chamberlain L.H."/>
        </authorList>
    </citation>
    <scope>INTERACTION WITH DNAJC5 AND SNAP25</scope>
    <scope>SUBCELLULAR LOCATION</scope>
</reference>
<reference key="8">
    <citation type="journal article" date="2015" name="J. Biol. Chem.">
        <title>Identification of a novel sequence motif recognized by the ankyrin repeat domain of zDHHC17/13 S-acyltransferases.</title>
        <authorList>
            <person name="Lemonidis K."/>
            <person name="Sanchez-Perez M.C."/>
            <person name="Chamberlain L.H."/>
        </authorList>
    </citation>
    <scope>INTERACTION WITH CLIP3; DNAJC5; HTT; MAP6; SNAP23 AND SNAP25</scope>
</reference>
<reference key="9">
    <citation type="journal article" date="2017" name="J. Biol. Chem.">
        <title>Peptide array based screening reveals a large number of proteins interacting with the ankyrin repeat domain of the zDHHC17 S-acyltransferase.</title>
        <authorList>
            <person name="Lemonidis K."/>
            <person name="MacLeod R."/>
            <person name="Baillie G.S."/>
            <person name="Chamberlain L.H."/>
        </authorList>
    </citation>
    <scope>INTERACTION WITH SPRED2</scope>
</reference>
<organism>
    <name type="scientific">Mus musculus</name>
    <name type="common">Mouse</name>
    <dbReference type="NCBI Taxonomy" id="10090"/>
    <lineage>
        <taxon>Eukaryota</taxon>
        <taxon>Metazoa</taxon>
        <taxon>Chordata</taxon>
        <taxon>Craniata</taxon>
        <taxon>Vertebrata</taxon>
        <taxon>Euteleostomi</taxon>
        <taxon>Mammalia</taxon>
        <taxon>Eutheria</taxon>
        <taxon>Euarchontoglires</taxon>
        <taxon>Glires</taxon>
        <taxon>Rodentia</taxon>
        <taxon>Myomorpha</taxon>
        <taxon>Muroidea</taxon>
        <taxon>Muridae</taxon>
        <taxon>Murinae</taxon>
        <taxon>Mus</taxon>
        <taxon>Mus</taxon>
    </lineage>
</organism>
<accession>Q9CWU2</accession>
<accession>Q3UK32</accession>
<accession>Q3UKV1</accession>
<proteinExistence type="evidence at protein level"/>
<protein>
    <recommendedName>
        <fullName evidence="13">Palmitoyltransferase ZDHHC13</fullName>
        <ecNumber evidence="6 7">2.3.1.225</ecNumber>
    </recommendedName>
    <alternativeName>
        <fullName evidence="11">Huntingtin-interacting protein 14-related protein</fullName>
        <shortName evidence="11">HIP14-related protein</shortName>
    </alternativeName>
    <alternativeName>
        <fullName evidence="15">Zinc finger DHHC domain-containing protein 13</fullName>
        <shortName evidence="12">DHHC-13</shortName>
    </alternativeName>
</protein>
<keyword id="KW-0007">Acetylation</keyword>
<keyword id="KW-0012">Acyltransferase</keyword>
<keyword id="KW-0040">ANK repeat</keyword>
<keyword id="KW-0968">Cytoplasmic vesicle</keyword>
<keyword id="KW-0333">Golgi apparatus</keyword>
<keyword id="KW-0449">Lipoprotein</keyword>
<keyword id="KW-0472">Membrane</keyword>
<keyword id="KW-0564">Palmitate</keyword>
<keyword id="KW-1185">Reference proteome</keyword>
<keyword id="KW-0677">Repeat</keyword>
<keyword id="KW-0808">Transferase</keyword>
<keyword id="KW-0812">Transmembrane</keyword>
<keyword id="KW-1133">Transmembrane helix</keyword>